<keyword id="KW-0149">Chlorophyll biosynthesis</keyword>
<keyword id="KW-0521">NADP</keyword>
<keyword id="KW-0560">Oxidoreductase</keyword>
<keyword id="KW-0627">Porphyrin biosynthesis</keyword>
<reference key="1">
    <citation type="submission" date="2005-07" db="EMBL/GenBank/DDBJ databases">
        <title>Complete sequence of Synechococcus sp. CC9605.</title>
        <authorList>
            <consortium name="US DOE Joint Genome Institute"/>
            <person name="Copeland A."/>
            <person name="Lucas S."/>
            <person name="Lapidus A."/>
            <person name="Barry K."/>
            <person name="Detter J.C."/>
            <person name="Glavina T."/>
            <person name="Hammon N."/>
            <person name="Israni S."/>
            <person name="Pitluck S."/>
            <person name="Schmutz J."/>
            <person name="Martinez M."/>
            <person name="Larimer F."/>
            <person name="Land M."/>
            <person name="Kyrpides N."/>
            <person name="Ivanova N."/>
            <person name="Richardson P."/>
        </authorList>
    </citation>
    <scope>NUCLEOTIDE SEQUENCE [LARGE SCALE GENOMIC DNA]</scope>
    <source>
        <strain>CC9605</strain>
    </source>
</reference>
<feature type="chain" id="PRO_1000004715" description="Glutamyl-tRNA reductase">
    <location>
        <begin position="1"/>
        <end position="432"/>
    </location>
</feature>
<feature type="active site" description="Nucleophile" evidence="1">
    <location>
        <position position="50"/>
    </location>
</feature>
<feature type="binding site" evidence="1">
    <location>
        <begin position="49"/>
        <end position="52"/>
    </location>
    <ligand>
        <name>substrate</name>
    </ligand>
</feature>
<feature type="binding site" evidence="1">
    <location>
        <position position="109"/>
    </location>
    <ligand>
        <name>substrate</name>
    </ligand>
</feature>
<feature type="binding site" evidence="1">
    <location>
        <begin position="114"/>
        <end position="116"/>
    </location>
    <ligand>
        <name>substrate</name>
    </ligand>
</feature>
<feature type="binding site" evidence="1">
    <location>
        <position position="120"/>
    </location>
    <ligand>
        <name>substrate</name>
    </ligand>
</feature>
<feature type="binding site" evidence="1">
    <location>
        <begin position="198"/>
        <end position="203"/>
    </location>
    <ligand>
        <name>NADP(+)</name>
        <dbReference type="ChEBI" id="CHEBI:58349"/>
    </ligand>
</feature>
<feature type="site" description="Important for activity" evidence="1">
    <location>
        <position position="99"/>
    </location>
</feature>
<comment type="function">
    <text evidence="1">Catalyzes the NADPH-dependent reduction of glutamyl-tRNA(Glu) to glutamate 1-semialdehyde (GSA).</text>
</comment>
<comment type="catalytic activity">
    <reaction evidence="1">
        <text>(S)-4-amino-5-oxopentanoate + tRNA(Glu) + NADP(+) = L-glutamyl-tRNA(Glu) + NADPH + H(+)</text>
        <dbReference type="Rhea" id="RHEA:12344"/>
        <dbReference type="Rhea" id="RHEA-COMP:9663"/>
        <dbReference type="Rhea" id="RHEA-COMP:9680"/>
        <dbReference type="ChEBI" id="CHEBI:15378"/>
        <dbReference type="ChEBI" id="CHEBI:57501"/>
        <dbReference type="ChEBI" id="CHEBI:57783"/>
        <dbReference type="ChEBI" id="CHEBI:58349"/>
        <dbReference type="ChEBI" id="CHEBI:78442"/>
        <dbReference type="ChEBI" id="CHEBI:78520"/>
        <dbReference type="EC" id="1.2.1.70"/>
    </reaction>
</comment>
<comment type="pathway">
    <text evidence="1">Porphyrin-containing compound metabolism; protoporphyrin-IX biosynthesis; 5-aminolevulinate from L-glutamyl-tRNA(Glu): step 1/2.</text>
</comment>
<comment type="pathway">
    <text evidence="1">Porphyrin-containing compound metabolism; chlorophyll biosynthesis.</text>
</comment>
<comment type="subunit">
    <text evidence="1">Homodimer.</text>
</comment>
<comment type="domain">
    <text evidence="1">Possesses an unusual extended V-shaped dimeric structure with each monomer consisting of three distinct domains arranged along a curved 'spinal' alpha-helix. The N-terminal catalytic domain specifically recognizes the glutamate moiety of the substrate. The second domain is the NADPH-binding domain, and the third C-terminal domain is responsible for dimerization.</text>
</comment>
<comment type="miscellaneous">
    <text evidence="1">During catalysis, the active site Cys acts as a nucleophile attacking the alpha-carbonyl group of tRNA-bound glutamate with the formation of a thioester intermediate between enzyme and glutamate, and the concomitant release of tRNA(Glu). The thioester intermediate is finally reduced by direct hydride transfer from NADPH, to form the product GSA.</text>
</comment>
<comment type="similarity">
    <text evidence="1">Belongs to the glutamyl-tRNA reductase family.</text>
</comment>
<organism>
    <name type="scientific">Synechococcus sp. (strain CC9605)</name>
    <dbReference type="NCBI Taxonomy" id="110662"/>
    <lineage>
        <taxon>Bacteria</taxon>
        <taxon>Bacillati</taxon>
        <taxon>Cyanobacteriota</taxon>
        <taxon>Cyanophyceae</taxon>
        <taxon>Synechococcales</taxon>
        <taxon>Synechococcaceae</taxon>
        <taxon>Synechococcus</taxon>
    </lineage>
</organism>
<protein>
    <recommendedName>
        <fullName evidence="1">Glutamyl-tRNA reductase</fullName>
        <shortName evidence="1">GluTR</shortName>
        <ecNumber evidence="1">1.2.1.70</ecNumber>
    </recommendedName>
</protein>
<accession>Q3AK73</accession>
<proteinExistence type="inferred from homology"/>
<evidence type="ECO:0000255" key="1">
    <source>
        <dbReference type="HAMAP-Rule" id="MF_00087"/>
    </source>
</evidence>
<sequence>MHISVVGLSHRTAPVEIRERLSIPEQTMETSLQSLRGNEQVLEASILSTCNRLEIYTLVRNPDLGVSAVSDFLSSHSGLETGELTPHLFSYHHEDAVDHLMRVAAGLDSLVLGEGQILSQVKKMMRLGQEHKSLGPILNRLLTQAVTTGKRVRSETNLGTGAVSISSAAVELAQLKLGQSRGLDHLVTLESEQIAVVGAGRMSRLLLQHLQAKGASGVVLLNRTVERAEQLSADFPDLPVQCRPLTDLDQYLSTCSLMFTSTAADDPIIDAARLAPLNRRSKLRLIDIGVPRNIAADAADVNGVESHDVDDLQEVVARNQEARQAMAREAEQLLQQEAQQFLEWWDSLEAVPTINQLRSSMESIRTEELQKALSRMGPDFSARERKVVEALSKGIINKILHTPVTQLRAPQTRQDRQQALRIVERLFDLEAS</sequence>
<gene>
    <name evidence="1" type="primary">hemA</name>
    <name type="ordered locus">Syncc9605_1254</name>
</gene>
<dbReference type="EC" id="1.2.1.70" evidence="1"/>
<dbReference type="EMBL" id="CP000110">
    <property type="protein sequence ID" value="ABB35009.1"/>
    <property type="molecule type" value="Genomic_DNA"/>
</dbReference>
<dbReference type="RefSeq" id="WP_011364228.1">
    <property type="nucleotide sequence ID" value="NC_007516.1"/>
</dbReference>
<dbReference type="SMR" id="Q3AK73"/>
<dbReference type="STRING" id="110662.Syncc9605_1254"/>
<dbReference type="KEGG" id="syd:Syncc9605_1254"/>
<dbReference type="eggNOG" id="COG0373">
    <property type="taxonomic scope" value="Bacteria"/>
</dbReference>
<dbReference type="HOGENOM" id="CLU_035113_2_1_3"/>
<dbReference type="OrthoDB" id="110209at2"/>
<dbReference type="UniPathway" id="UPA00251">
    <property type="reaction ID" value="UER00316"/>
</dbReference>
<dbReference type="UniPathway" id="UPA00668"/>
<dbReference type="GO" id="GO:0008883">
    <property type="term" value="F:glutamyl-tRNA reductase activity"/>
    <property type="evidence" value="ECO:0007669"/>
    <property type="project" value="UniProtKB-UniRule"/>
</dbReference>
<dbReference type="GO" id="GO:0050661">
    <property type="term" value="F:NADP binding"/>
    <property type="evidence" value="ECO:0007669"/>
    <property type="project" value="InterPro"/>
</dbReference>
<dbReference type="GO" id="GO:0015995">
    <property type="term" value="P:chlorophyll biosynthetic process"/>
    <property type="evidence" value="ECO:0007669"/>
    <property type="project" value="UniProtKB-UniPathway"/>
</dbReference>
<dbReference type="GO" id="GO:0006782">
    <property type="term" value="P:protoporphyrinogen IX biosynthetic process"/>
    <property type="evidence" value="ECO:0007669"/>
    <property type="project" value="UniProtKB-UniRule"/>
</dbReference>
<dbReference type="CDD" id="cd05213">
    <property type="entry name" value="NAD_bind_Glutamyl_tRNA_reduct"/>
    <property type="match status" value="1"/>
</dbReference>
<dbReference type="FunFam" id="3.30.460.30:FF:000001">
    <property type="entry name" value="Glutamyl-tRNA reductase"/>
    <property type="match status" value="1"/>
</dbReference>
<dbReference type="Gene3D" id="3.30.460.30">
    <property type="entry name" value="Glutamyl-tRNA reductase, N-terminal domain"/>
    <property type="match status" value="1"/>
</dbReference>
<dbReference type="Gene3D" id="3.40.50.720">
    <property type="entry name" value="NAD(P)-binding Rossmann-like Domain"/>
    <property type="match status" value="1"/>
</dbReference>
<dbReference type="HAMAP" id="MF_00087">
    <property type="entry name" value="Glu_tRNA_reductase"/>
    <property type="match status" value="1"/>
</dbReference>
<dbReference type="InterPro" id="IPR000343">
    <property type="entry name" value="4pyrrol_synth_GluRdtase"/>
</dbReference>
<dbReference type="InterPro" id="IPR015896">
    <property type="entry name" value="4pyrrol_synth_GluRdtase_dimer"/>
</dbReference>
<dbReference type="InterPro" id="IPR015895">
    <property type="entry name" value="4pyrrol_synth_GluRdtase_N"/>
</dbReference>
<dbReference type="InterPro" id="IPR018214">
    <property type="entry name" value="GluRdtase_CS"/>
</dbReference>
<dbReference type="InterPro" id="IPR036453">
    <property type="entry name" value="GluRdtase_dimer_dom_sf"/>
</dbReference>
<dbReference type="InterPro" id="IPR036343">
    <property type="entry name" value="GluRdtase_N_sf"/>
</dbReference>
<dbReference type="InterPro" id="IPR036291">
    <property type="entry name" value="NAD(P)-bd_dom_sf"/>
</dbReference>
<dbReference type="InterPro" id="IPR006151">
    <property type="entry name" value="Shikm_DH/Glu-tRNA_Rdtase"/>
</dbReference>
<dbReference type="NCBIfam" id="TIGR01035">
    <property type="entry name" value="hemA"/>
    <property type="match status" value="1"/>
</dbReference>
<dbReference type="NCBIfam" id="NF000744">
    <property type="entry name" value="PRK00045.1-3"/>
    <property type="match status" value="1"/>
</dbReference>
<dbReference type="PANTHER" id="PTHR43120">
    <property type="entry name" value="GLUTAMYL-TRNA REDUCTASE 1, CHLOROPLASTIC"/>
    <property type="match status" value="1"/>
</dbReference>
<dbReference type="PANTHER" id="PTHR43120:SF1">
    <property type="entry name" value="GLUTAMYL-TRNA REDUCTASE 1, CHLOROPLASTIC"/>
    <property type="match status" value="1"/>
</dbReference>
<dbReference type="Pfam" id="PF00745">
    <property type="entry name" value="GlutR_dimer"/>
    <property type="match status" value="1"/>
</dbReference>
<dbReference type="Pfam" id="PF05201">
    <property type="entry name" value="GlutR_N"/>
    <property type="match status" value="1"/>
</dbReference>
<dbReference type="Pfam" id="PF01488">
    <property type="entry name" value="Shikimate_DH"/>
    <property type="match status" value="1"/>
</dbReference>
<dbReference type="PIRSF" id="PIRSF000445">
    <property type="entry name" value="4pyrrol_synth_GluRdtase"/>
    <property type="match status" value="1"/>
</dbReference>
<dbReference type="SUPFAM" id="SSF69742">
    <property type="entry name" value="Glutamyl tRNA-reductase catalytic, N-terminal domain"/>
    <property type="match status" value="1"/>
</dbReference>
<dbReference type="SUPFAM" id="SSF69075">
    <property type="entry name" value="Glutamyl tRNA-reductase dimerization domain"/>
    <property type="match status" value="1"/>
</dbReference>
<dbReference type="SUPFAM" id="SSF51735">
    <property type="entry name" value="NAD(P)-binding Rossmann-fold domains"/>
    <property type="match status" value="1"/>
</dbReference>
<dbReference type="PROSITE" id="PS00747">
    <property type="entry name" value="GLUTR"/>
    <property type="match status" value="1"/>
</dbReference>
<name>HEM1_SYNSC</name>